<accession>Q839W3</accession>
<evidence type="ECO:0000255" key="1">
    <source>
        <dbReference type="HAMAP-Rule" id="MF_00412"/>
    </source>
</evidence>
<keyword id="KW-0028">Amino-acid biosynthesis</keyword>
<keyword id="KW-0963">Cytoplasm</keyword>
<keyword id="KW-0521">NADP</keyword>
<keyword id="KW-0560">Oxidoreductase</keyword>
<keyword id="KW-0641">Proline biosynthesis</keyword>
<keyword id="KW-1185">Reference proteome</keyword>
<comment type="function">
    <text evidence="1">Catalyzes the NADPH-dependent reduction of L-glutamate 5-phosphate into L-glutamate 5-semialdehyde and phosphate. The product spontaneously undergoes cyclization to form 1-pyrroline-5-carboxylate.</text>
</comment>
<comment type="catalytic activity">
    <reaction evidence="1">
        <text>L-glutamate 5-semialdehyde + phosphate + NADP(+) = L-glutamyl 5-phosphate + NADPH + H(+)</text>
        <dbReference type="Rhea" id="RHEA:19541"/>
        <dbReference type="ChEBI" id="CHEBI:15378"/>
        <dbReference type="ChEBI" id="CHEBI:43474"/>
        <dbReference type="ChEBI" id="CHEBI:57783"/>
        <dbReference type="ChEBI" id="CHEBI:58066"/>
        <dbReference type="ChEBI" id="CHEBI:58274"/>
        <dbReference type="ChEBI" id="CHEBI:58349"/>
        <dbReference type="EC" id="1.2.1.41"/>
    </reaction>
</comment>
<comment type="pathway">
    <text evidence="1">Amino-acid biosynthesis; L-proline biosynthesis; L-glutamate 5-semialdehyde from L-glutamate: step 2/2.</text>
</comment>
<comment type="subcellular location">
    <subcellularLocation>
        <location evidence="1">Cytoplasm</location>
    </subcellularLocation>
</comment>
<comment type="similarity">
    <text evidence="1">Belongs to the gamma-glutamyl phosphate reductase family.</text>
</comment>
<gene>
    <name evidence="1" type="primary">proA</name>
    <name type="ordered locus">EF_0037</name>
</gene>
<organism>
    <name type="scientific">Enterococcus faecalis (strain ATCC 700802 / V583)</name>
    <dbReference type="NCBI Taxonomy" id="226185"/>
    <lineage>
        <taxon>Bacteria</taxon>
        <taxon>Bacillati</taxon>
        <taxon>Bacillota</taxon>
        <taxon>Bacilli</taxon>
        <taxon>Lactobacillales</taxon>
        <taxon>Enterococcaceae</taxon>
        <taxon>Enterococcus</taxon>
    </lineage>
</organism>
<protein>
    <recommendedName>
        <fullName evidence="1">Gamma-glutamyl phosphate reductase</fullName>
        <shortName evidence="1">GPR</shortName>
        <ecNumber evidence="1">1.2.1.41</ecNumber>
    </recommendedName>
    <alternativeName>
        <fullName evidence="1">Glutamate-5-semialdehyde dehydrogenase</fullName>
    </alternativeName>
    <alternativeName>
        <fullName evidence="1">Glutamyl-gamma-semialdehyde dehydrogenase</fullName>
        <shortName evidence="1">GSA dehydrogenase</shortName>
    </alternativeName>
</protein>
<feature type="chain" id="PRO_0000189726" description="Gamma-glutamyl phosphate reductase">
    <location>
        <begin position="1"/>
        <end position="417"/>
    </location>
</feature>
<sequence length="417" mass="45927">MKVTDLKQLGQQAKEASYTLGLMDTRQKNTLLNKMAAAIEANAPRILQANALDLEQAATHGISETMQDRLRLTEERITAMAEGIRQVATLPDPIGEVDKMWRNEAGLLIGQQRVPLGVIGIIYESRPNVTTDAASLCFKSGNAVILRGGKEAFHSNQILVTILQEALIQEAVSPHLIQFVDDTSRETAQQLMRLNDYLDVLIPRGGANLIKTVLTTATVPVIETGTGNCHIYVDKDAQLTMATEIIVNAKCQRPSVCNAAETLLIHQEVAEAFLPTIEKALKEFHVELRADERALAIFEEAIPATEQDWETEFLDFILAVKVVDSLDEAIQHINRYNTKHSESIISDNYFATQQFLQQVDAAAVYANASTRFTDGFEFGFGAEIGISTQKLHARGPMGLAELTSTKYVIYGNGQARS</sequence>
<proteinExistence type="inferred from homology"/>
<dbReference type="EC" id="1.2.1.41" evidence="1"/>
<dbReference type="EMBL" id="AE016830">
    <property type="protein sequence ID" value="AAO79919.1"/>
    <property type="molecule type" value="Genomic_DNA"/>
</dbReference>
<dbReference type="RefSeq" id="NP_813847.1">
    <property type="nucleotide sequence ID" value="NC_004668.1"/>
</dbReference>
<dbReference type="RefSeq" id="WP_002385467.1">
    <property type="nucleotide sequence ID" value="NZ_KE136524.1"/>
</dbReference>
<dbReference type="SMR" id="Q839W3"/>
<dbReference type="STRING" id="226185.EF_0037"/>
<dbReference type="EnsemblBacteria" id="AAO79919">
    <property type="protein sequence ID" value="AAO79919"/>
    <property type="gene ID" value="EF_0037"/>
</dbReference>
<dbReference type="KEGG" id="efa:EF0037"/>
<dbReference type="PATRIC" id="fig|226185.9.peg.34"/>
<dbReference type="eggNOG" id="COG0014">
    <property type="taxonomic scope" value="Bacteria"/>
</dbReference>
<dbReference type="HOGENOM" id="CLU_030231_0_0_9"/>
<dbReference type="UniPathway" id="UPA00098">
    <property type="reaction ID" value="UER00360"/>
</dbReference>
<dbReference type="Proteomes" id="UP000001415">
    <property type="component" value="Chromosome"/>
</dbReference>
<dbReference type="GO" id="GO:0005737">
    <property type="term" value="C:cytoplasm"/>
    <property type="evidence" value="ECO:0007669"/>
    <property type="project" value="UniProtKB-SubCell"/>
</dbReference>
<dbReference type="GO" id="GO:0004350">
    <property type="term" value="F:glutamate-5-semialdehyde dehydrogenase activity"/>
    <property type="evidence" value="ECO:0007669"/>
    <property type="project" value="UniProtKB-UniRule"/>
</dbReference>
<dbReference type="GO" id="GO:0050661">
    <property type="term" value="F:NADP binding"/>
    <property type="evidence" value="ECO:0007669"/>
    <property type="project" value="InterPro"/>
</dbReference>
<dbReference type="GO" id="GO:0055129">
    <property type="term" value="P:L-proline biosynthetic process"/>
    <property type="evidence" value="ECO:0007669"/>
    <property type="project" value="UniProtKB-UniRule"/>
</dbReference>
<dbReference type="CDD" id="cd07079">
    <property type="entry name" value="ALDH_F18-19_ProA-GPR"/>
    <property type="match status" value="1"/>
</dbReference>
<dbReference type="FunFam" id="3.40.309.10:FF:000006">
    <property type="entry name" value="Gamma-glutamyl phosphate reductase"/>
    <property type="match status" value="1"/>
</dbReference>
<dbReference type="Gene3D" id="3.40.605.10">
    <property type="entry name" value="Aldehyde Dehydrogenase, Chain A, domain 1"/>
    <property type="match status" value="1"/>
</dbReference>
<dbReference type="Gene3D" id="3.40.309.10">
    <property type="entry name" value="Aldehyde Dehydrogenase, Chain A, domain 2"/>
    <property type="match status" value="1"/>
</dbReference>
<dbReference type="HAMAP" id="MF_00412">
    <property type="entry name" value="ProA"/>
    <property type="match status" value="1"/>
</dbReference>
<dbReference type="InterPro" id="IPR016161">
    <property type="entry name" value="Ald_DH/histidinol_DH"/>
</dbReference>
<dbReference type="InterPro" id="IPR016163">
    <property type="entry name" value="Ald_DH_C"/>
</dbReference>
<dbReference type="InterPro" id="IPR016162">
    <property type="entry name" value="Ald_DH_N"/>
</dbReference>
<dbReference type="InterPro" id="IPR015590">
    <property type="entry name" value="Aldehyde_DH_dom"/>
</dbReference>
<dbReference type="InterPro" id="IPR020593">
    <property type="entry name" value="G-glutamylP_reductase_CS"/>
</dbReference>
<dbReference type="InterPro" id="IPR012134">
    <property type="entry name" value="Glu-5-SA_DH"/>
</dbReference>
<dbReference type="InterPro" id="IPR000965">
    <property type="entry name" value="GPR_dom"/>
</dbReference>
<dbReference type="NCBIfam" id="NF001221">
    <property type="entry name" value="PRK00197.1"/>
    <property type="match status" value="1"/>
</dbReference>
<dbReference type="NCBIfam" id="TIGR00407">
    <property type="entry name" value="proA"/>
    <property type="match status" value="1"/>
</dbReference>
<dbReference type="PANTHER" id="PTHR11063:SF8">
    <property type="entry name" value="DELTA-1-PYRROLINE-5-CARBOXYLATE SYNTHASE"/>
    <property type="match status" value="1"/>
</dbReference>
<dbReference type="PANTHER" id="PTHR11063">
    <property type="entry name" value="GLUTAMATE SEMIALDEHYDE DEHYDROGENASE"/>
    <property type="match status" value="1"/>
</dbReference>
<dbReference type="Pfam" id="PF00171">
    <property type="entry name" value="Aldedh"/>
    <property type="match status" value="1"/>
</dbReference>
<dbReference type="PIRSF" id="PIRSF000151">
    <property type="entry name" value="GPR"/>
    <property type="match status" value="1"/>
</dbReference>
<dbReference type="SUPFAM" id="SSF53720">
    <property type="entry name" value="ALDH-like"/>
    <property type="match status" value="1"/>
</dbReference>
<dbReference type="PROSITE" id="PS01223">
    <property type="entry name" value="PROA"/>
    <property type="match status" value="1"/>
</dbReference>
<reference key="1">
    <citation type="journal article" date="2003" name="Science">
        <title>Role of mobile DNA in the evolution of vancomycin-resistant Enterococcus faecalis.</title>
        <authorList>
            <person name="Paulsen I.T."/>
            <person name="Banerjei L."/>
            <person name="Myers G.S.A."/>
            <person name="Nelson K.E."/>
            <person name="Seshadri R."/>
            <person name="Read T.D."/>
            <person name="Fouts D.E."/>
            <person name="Eisen J.A."/>
            <person name="Gill S.R."/>
            <person name="Heidelberg J.F."/>
            <person name="Tettelin H."/>
            <person name="Dodson R.J."/>
            <person name="Umayam L.A."/>
            <person name="Brinkac L.M."/>
            <person name="Beanan M.J."/>
            <person name="Daugherty S.C."/>
            <person name="DeBoy R.T."/>
            <person name="Durkin S.A."/>
            <person name="Kolonay J.F."/>
            <person name="Madupu R."/>
            <person name="Nelson W.C."/>
            <person name="Vamathevan J.J."/>
            <person name="Tran B."/>
            <person name="Upton J."/>
            <person name="Hansen T."/>
            <person name="Shetty J."/>
            <person name="Khouri H.M."/>
            <person name="Utterback T.R."/>
            <person name="Radune D."/>
            <person name="Ketchum K.A."/>
            <person name="Dougherty B.A."/>
            <person name="Fraser C.M."/>
        </authorList>
    </citation>
    <scope>NUCLEOTIDE SEQUENCE [LARGE SCALE GENOMIC DNA]</scope>
    <source>
        <strain>ATCC 700802 / V583</strain>
    </source>
</reference>
<name>PROA_ENTFA</name>